<proteinExistence type="inferred from homology"/>
<comment type="function">
    <text evidence="1">Ligates lysine onto the cytidine present at position 34 of the AUA codon-specific tRNA(Ile) that contains the anticodon CAU, in an ATP-dependent manner. Cytidine is converted to lysidine, thus changing the amino acid specificity of the tRNA from methionine to isoleucine.</text>
</comment>
<comment type="catalytic activity">
    <reaction evidence="1">
        <text>cytidine(34) in tRNA(Ile2) + L-lysine + ATP = lysidine(34) in tRNA(Ile2) + AMP + diphosphate + H(+)</text>
        <dbReference type="Rhea" id="RHEA:43744"/>
        <dbReference type="Rhea" id="RHEA-COMP:10625"/>
        <dbReference type="Rhea" id="RHEA-COMP:10670"/>
        <dbReference type="ChEBI" id="CHEBI:15378"/>
        <dbReference type="ChEBI" id="CHEBI:30616"/>
        <dbReference type="ChEBI" id="CHEBI:32551"/>
        <dbReference type="ChEBI" id="CHEBI:33019"/>
        <dbReference type="ChEBI" id="CHEBI:82748"/>
        <dbReference type="ChEBI" id="CHEBI:83665"/>
        <dbReference type="ChEBI" id="CHEBI:456215"/>
        <dbReference type="EC" id="6.3.4.19"/>
    </reaction>
</comment>
<comment type="subcellular location">
    <subcellularLocation>
        <location evidence="1">Cytoplasm</location>
    </subcellularLocation>
</comment>
<comment type="domain">
    <text>The N-terminal region contains the highly conserved SGGXDS motif, predicted to be a P-loop motif involved in ATP binding.</text>
</comment>
<comment type="similarity">
    <text evidence="1">Belongs to the tRNA(Ile)-lysidine synthase family.</text>
</comment>
<sequence length="297" mass="35736">MQIKIKSKEKYLIGVSGGSDSMFLLNKYKNQDVIVAHINYNLRPEAIFETLLVSKFCQKYNLELKILSFDSFKIKKNLQSGLRLGRYQFFEKIYKEFNCTKLLVGHHRDDFLETVFLQKKQKKIVTFWGIHKKNNLFNMEILRPFLYWRTKKQIIRICQQKKIPYLDDQSNFTGKYQRNQIRFLLEKKSDFSLFFLFLFYYLINIFKLIILKNQKKILQNWQKTGYNINFFKKIKIKSKIIFLFVNQNFDNVKLTRGKINEIINFICGKSTSGAFLLKKNNYIIKKKWKILPKSSKI</sequence>
<gene>
    <name evidence="1" type="primary">tilS</name>
    <name type="ordered locus">mhp176</name>
</gene>
<evidence type="ECO:0000255" key="1">
    <source>
        <dbReference type="HAMAP-Rule" id="MF_01161"/>
    </source>
</evidence>
<name>TILS_MESH2</name>
<dbReference type="EC" id="6.3.4.19" evidence="1"/>
<dbReference type="EMBL" id="AE017332">
    <property type="protein sequence ID" value="AAV27757.1"/>
    <property type="molecule type" value="Genomic_DNA"/>
</dbReference>
<dbReference type="RefSeq" id="WP_011206013.1">
    <property type="nucleotide sequence ID" value="NC_006360.1"/>
</dbReference>
<dbReference type="SMR" id="Q601M6"/>
<dbReference type="KEGG" id="mhy:mhp176"/>
<dbReference type="eggNOG" id="COG0037">
    <property type="taxonomic scope" value="Bacteria"/>
</dbReference>
<dbReference type="HOGENOM" id="CLU_018869_0_2_14"/>
<dbReference type="PhylomeDB" id="Q601M6"/>
<dbReference type="Proteomes" id="UP000006822">
    <property type="component" value="Chromosome"/>
</dbReference>
<dbReference type="GO" id="GO:0005737">
    <property type="term" value="C:cytoplasm"/>
    <property type="evidence" value="ECO:0007669"/>
    <property type="project" value="UniProtKB-SubCell"/>
</dbReference>
<dbReference type="GO" id="GO:0005524">
    <property type="term" value="F:ATP binding"/>
    <property type="evidence" value="ECO:0007669"/>
    <property type="project" value="UniProtKB-UniRule"/>
</dbReference>
<dbReference type="GO" id="GO:0032267">
    <property type="term" value="F:tRNA(Ile)-lysidine synthase activity"/>
    <property type="evidence" value="ECO:0007669"/>
    <property type="project" value="UniProtKB-EC"/>
</dbReference>
<dbReference type="GO" id="GO:0006400">
    <property type="term" value="P:tRNA modification"/>
    <property type="evidence" value="ECO:0007669"/>
    <property type="project" value="UniProtKB-UniRule"/>
</dbReference>
<dbReference type="CDD" id="cd01992">
    <property type="entry name" value="TilS_N"/>
    <property type="match status" value="1"/>
</dbReference>
<dbReference type="Gene3D" id="3.40.50.620">
    <property type="entry name" value="HUPs"/>
    <property type="match status" value="1"/>
</dbReference>
<dbReference type="HAMAP" id="MF_01161">
    <property type="entry name" value="tRNA_Ile_lys_synt"/>
    <property type="match status" value="1"/>
</dbReference>
<dbReference type="InterPro" id="IPR014729">
    <property type="entry name" value="Rossmann-like_a/b/a_fold"/>
</dbReference>
<dbReference type="InterPro" id="IPR011063">
    <property type="entry name" value="TilS/TtcA_N"/>
</dbReference>
<dbReference type="InterPro" id="IPR012094">
    <property type="entry name" value="tRNA_Ile_lys_synt"/>
</dbReference>
<dbReference type="InterPro" id="IPR012795">
    <property type="entry name" value="tRNA_Ile_lys_synt_N"/>
</dbReference>
<dbReference type="NCBIfam" id="TIGR02432">
    <property type="entry name" value="lysidine_TilS_N"/>
    <property type="match status" value="1"/>
</dbReference>
<dbReference type="PANTHER" id="PTHR43033">
    <property type="entry name" value="TRNA(ILE)-LYSIDINE SYNTHASE-RELATED"/>
    <property type="match status" value="1"/>
</dbReference>
<dbReference type="PANTHER" id="PTHR43033:SF1">
    <property type="entry name" value="TRNA(ILE)-LYSIDINE SYNTHASE-RELATED"/>
    <property type="match status" value="1"/>
</dbReference>
<dbReference type="Pfam" id="PF01171">
    <property type="entry name" value="ATP_bind_3"/>
    <property type="match status" value="1"/>
</dbReference>
<dbReference type="SUPFAM" id="SSF52402">
    <property type="entry name" value="Adenine nucleotide alpha hydrolases-like"/>
    <property type="match status" value="1"/>
</dbReference>
<accession>Q601M6</accession>
<protein>
    <recommendedName>
        <fullName evidence="1">tRNA(Ile)-lysidine synthase</fullName>
        <ecNumber evidence="1">6.3.4.19</ecNumber>
    </recommendedName>
    <alternativeName>
        <fullName evidence="1">tRNA(Ile)-2-lysyl-cytidine synthase</fullName>
    </alternativeName>
    <alternativeName>
        <fullName evidence="1">tRNA(Ile)-lysidine synthetase</fullName>
    </alternativeName>
</protein>
<organism>
    <name type="scientific">Mesomycoplasma hyopneumoniae (strain 232)</name>
    <name type="common">Mycoplasma hyopneumoniae</name>
    <dbReference type="NCBI Taxonomy" id="295358"/>
    <lineage>
        <taxon>Bacteria</taxon>
        <taxon>Bacillati</taxon>
        <taxon>Mycoplasmatota</taxon>
        <taxon>Mycoplasmoidales</taxon>
        <taxon>Metamycoplasmataceae</taxon>
        <taxon>Mesomycoplasma</taxon>
    </lineage>
</organism>
<keyword id="KW-0067">ATP-binding</keyword>
<keyword id="KW-0963">Cytoplasm</keyword>
<keyword id="KW-0436">Ligase</keyword>
<keyword id="KW-0547">Nucleotide-binding</keyword>
<keyword id="KW-0819">tRNA processing</keyword>
<reference key="1">
    <citation type="journal article" date="2004" name="J. Bacteriol.">
        <title>The genome sequence of Mycoplasma hyopneumoniae strain 232, the agent of swine mycoplasmosis.</title>
        <authorList>
            <person name="Minion F.C."/>
            <person name="Lefkowitz E.J."/>
            <person name="Madsen M.L."/>
            <person name="Cleary B.J."/>
            <person name="Swartzell S.M."/>
            <person name="Mahairas G.G."/>
        </authorList>
    </citation>
    <scope>NUCLEOTIDE SEQUENCE [LARGE SCALE GENOMIC DNA]</scope>
    <source>
        <strain>232</strain>
    </source>
</reference>
<feature type="chain" id="PRO_0000181728" description="tRNA(Ile)-lysidine synthase">
    <location>
        <begin position="1"/>
        <end position="297"/>
    </location>
</feature>
<feature type="binding site" evidence="1">
    <location>
        <begin position="16"/>
        <end position="21"/>
    </location>
    <ligand>
        <name>ATP</name>
        <dbReference type="ChEBI" id="CHEBI:30616"/>
    </ligand>
</feature>